<name>RSMH_CAMJJ</name>
<keyword id="KW-0963">Cytoplasm</keyword>
<keyword id="KW-0489">Methyltransferase</keyword>
<keyword id="KW-0698">rRNA processing</keyword>
<keyword id="KW-0949">S-adenosyl-L-methionine</keyword>
<keyword id="KW-0808">Transferase</keyword>
<proteinExistence type="inferred from homology"/>
<feature type="chain" id="PRO_0000386788" description="Ribosomal RNA small subunit methyltransferase H">
    <location>
        <begin position="1"/>
        <end position="310"/>
    </location>
</feature>
<feature type="binding site" evidence="1">
    <location>
        <begin position="33"/>
        <end position="35"/>
    </location>
    <ligand>
        <name>S-adenosyl-L-methionine</name>
        <dbReference type="ChEBI" id="CHEBI:59789"/>
    </ligand>
</feature>
<feature type="binding site" evidence="1">
    <location>
        <position position="52"/>
    </location>
    <ligand>
        <name>S-adenosyl-L-methionine</name>
        <dbReference type="ChEBI" id="CHEBI:59789"/>
    </ligand>
</feature>
<feature type="binding site" evidence="1">
    <location>
        <position position="79"/>
    </location>
    <ligand>
        <name>S-adenosyl-L-methionine</name>
        <dbReference type="ChEBI" id="CHEBI:59789"/>
    </ligand>
</feature>
<feature type="binding site" evidence="1">
    <location>
        <position position="98"/>
    </location>
    <ligand>
        <name>S-adenosyl-L-methionine</name>
        <dbReference type="ChEBI" id="CHEBI:59789"/>
    </ligand>
</feature>
<feature type="binding site" evidence="1">
    <location>
        <position position="105"/>
    </location>
    <ligand>
        <name>S-adenosyl-L-methionine</name>
        <dbReference type="ChEBI" id="CHEBI:59789"/>
    </ligand>
</feature>
<reference key="1">
    <citation type="submission" date="2006-12" db="EMBL/GenBank/DDBJ databases">
        <authorList>
            <person name="Fouts D.E."/>
            <person name="Nelson K.E."/>
            <person name="Sebastian Y."/>
        </authorList>
    </citation>
    <scope>NUCLEOTIDE SEQUENCE [LARGE SCALE GENOMIC DNA]</scope>
    <source>
        <strain>81-176</strain>
    </source>
</reference>
<sequence>MEIPHIPVLLNEVQEIFKNLKTGYFLDCTLGFGGHSEALLKNHPDLKFIACDQDQQALEFSKKRLKDFHNRITFVQSNFSEVLEKISHKEELRGILADIGVSSFQLDNNERGFSVNSDFLDMRMNQNSKISAYEIINTYTKEQLTSIFKDYGELHDAHFIAEKICLERSKNPIKSAKELYQIIGKGKQNHRKISKATLAFQAIRIEVNQELKVLKDFLEHLENLKPKNCILAIISFHSLEDRIVKQFFKKWSKNCICNEKIMRCECGNNHSLGQIITKKAISASKEELLKNSRSSCAKMRAFYFNNLDNK</sequence>
<accession>A1VZ48</accession>
<gene>
    <name evidence="1" type="primary">rsmH</name>
    <name type="synonym">mraW</name>
    <name type="ordered locus">CJJ81176_0716</name>
</gene>
<evidence type="ECO:0000255" key="1">
    <source>
        <dbReference type="HAMAP-Rule" id="MF_01007"/>
    </source>
</evidence>
<comment type="function">
    <text evidence="1">Specifically methylates the N4 position of cytidine in position 1402 (C1402) of 16S rRNA.</text>
</comment>
<comment type="catalytic activity">
    <reaction evidence="1">
        <text>cytidine(1402) in 16S rRNA + S-adenosyl-L-methionine = N(4)-methylcytidine(1402) in 16S rRNA + S-adenosyl-L-homocysteine + H(+)</text>
        <dbReference type="Rhea" id="RHEA:42928"/>
        <dbReference type="Rhea" id="RHEA-COMP:10286"/>
        <dbReference type="Rhea" id="RHEA-COMP:10287"/>
        <dbReference type="ChEBI" id="CHEBI:15378"/>
        <dbReference type="ChEBI" id="CHEBI:57856"/>
        <dbReference type="ChEBI" id="CHEBI:59789"/>
        <dbReference type="ChEBI" id="CHEBI:74506"/>
        <dbReference type="ChEBI" id="CHEBI:82748"/>
        <dbReference type="EC" id="2.1.1.199"/>
    </reaction>
</comment>
<comment type="subcellular location">
    <subcellularLocation>
        <location evidence="1">Cytoplasm</location>
    </subcellularLocation>
</comment>
<comment type="similarity">
    <text evidence="1">Belongs to the methyltransferase superfamily. RsmH family.</text>
</comment>
<protein>
    <recommendedName>
        <fullName evidence="1">Ribosomal RNA small subunit methyltransferase H</fullName>
        <ecNumber evidence="1">2.1.1.199</ecNumber>
    </recommendedName>
    <alternativeName>
        <fullName evidence="1">16S rRNA m(4)C1402 methyltransferase</fullName>
    </alternativeName>
    <alternativeName>
        <fullName evidence="1">rRNA (cytosine-N(4)-)-methyltransferase RsmH</fullName>
    </alternativeName>
</protein>
<organism>
    <name type="scientific">Campylobacter jejuni subsp. jejuni serotype O:23/36 (strain 81-176)</name>
    <dbReference type="NCBI Taxonomy" id="354242"/>
    <lineage>
        <taxon>Bacteria</taxon>
        <taxon>Pseudomonadati</taxon>
        <taxon>Campylobacterota</taxon>
        <taxon>Epsilonproteobacteria</taxon>
        <taxon>Campylobacterales</taxon>
        <taxon>Campylobacteraceae</taxon>
        <taxon>Campylobacter</taxon>
    </lineage>
</organism>
<dbReference type="EC" id="2.1.1.199" evidence="1"/>
<dbReference type="EMBL" id="CP000538">
    <property type="protein sequence ID" value="EAQ72490.1"/>
    <property type="molecule type" value="Genomic_DNA"/>
</dbReference>
<dbReference type="SMR" id="A1VZ48"/>
<dbReference type="KEGG" id="cjj:CJJ81176_0716"/>
<dbReference type="eggNOG" id="COG0275">
    <property type="taxonomic scope" value="Bacteria"/>
</dbReference>
<dbReference type="HOGENOM" id="CLU_038422_3_0_7"/>
<dbReference type="Proteomes" id="UP000000646">
    <property type="component" value="Chromosome"/>
</dbReference>
<dbReference type="GO" id="GO:0005737">
    <property type="term" value="C:cytoplasm"/>
    <property type="evidence" value="ECO:0007669"/>
    <property type="project" value="UniProtKB-SubCell"/>
</dbReference>
<dbReference type="GO" id="GO:0071424">
    <property type="term" value="F:rRNA (cytosine-N4-)-methyltransferase activity"/>
    <property type="evidence" value="ECO:0007669"/>
    <property type="project" value="UniProtKB-UniRule"/>
</dbReference>
<dbReference type="GO" id="GO:0070475">
    <property type="term" value="P:rRNA base methylation"/>
    <property type="evidence" value="ECO:0007669"/>
    <property type="project" value="UniProtKB-UniRule"/>
</dbReference>
<dbReference type="Gene3D" id="1.10.150.170">
    <property type="entry name" value="Putative methyltransferase TM0872, insert domain"/>
    <property type="match status" value="1"/>
</dbReference>
<dbReference type="Gene3D" id="3.40.50.150">
    <property type="entry name" value="Vaccinia Virus protein VP39"/>
    <property type="match status" value="1"/>
</dbReference>
<dbReference type="HAMAP" id="MF_01007">
    <property type="entry name" value="16SrRNA_methyltr_H"/>
    <property type="match status" value="1"/>
</dbReference>
<dbReference type="InterPro" id="IPR002903">
    <property type="entry name" value="RsmH"/>
</dbReference>
<dbReference type="InterPro" id="IPR023397">
    <property type="entry name" value="SAM-dep_MeTrfase_MraW_recog"/>
</dbReference>
<dbReference type="InterPro" id="IPR029063">
    <property type="entry name" value="SAM-dependent_MTases_sf"/>
</dbReference>
<dbReference type="NCBIfam" id="TIGR00006">
    <property type="entry name" value="16S rRNA (cytosine(1402)-N(4))-methyltransferase RsmH"/>
    <property type="match status" value="1"/>
</dbReference>
<dbReference type="PANTHER" id="PTHR11265:SF0">
    <property type="entry name" value="12S RRNA N4-METHYLCYTIDINE METHYLTRANSFERASE"/>
    <property type="match status" value="1"/>
</dbReference>
<dbReference type="PANTHER" id="PTHR11265">
    <property type="entry name" value="S-ADENOSYL-METHYLTRANSFERASE MRAW"/>
    <property type="match status" value="1"/>
</dbReference>
<dbReference type="Pfam" id="PF01795">
    <property type="entry name" value="Methyltransf_5"/>
    <property type="match status" value="1"/>
</dbReference>
<dbReference type="PIRSF" id="PIRSF004486">
    <property type="entry name" value="MraW"/>
    <property type="match status" value="1"/>
</dbReference>
<dbReference type="SUPFAM" id="SSF81799">
    <property type="entry name" value="Putative methyltransferase TM0872, insert domain"/>
    <property type="match status" value="1"/>
</dbReference>
<dbReference type="SUPFAM" id="SSF53335">
    <property type="entry name" value="S-adenosyl-L-methionine-dependent methyltransferases"/>
    <property type="match status" value="1"/>
</dbReference>